<keyword id="KW-0014">AIDS</keyword>
<keyword id="KW-0167">Capsid protein</keyword>
<keyword id="KW-1032">Host cell membrane</keyword>
<keyword id="KW-1035">Host cytoplasm</keyword>
<keyword id="KW-1039">Host endosome</keyword>
<keyword id="KW-1043">Host membrane</keyword>
<keyword id="KW-1048">Host nucleus</keyword>
<keyword id="KW-0945">Host-virus interaction</keyword>
<keyword id="KW-0449">Lipoprotein</keyword>
<keyword id="KW-0472">Membrane</keyword>
<keyword id="KW-0479">Metal-binding</keyword>
<keyword id="KW-0488">Methylation</keyword>
<keyword id="KW-0519">Myristate</keyword>
<keyword id="KW-0597">Phosphoprotein</keyword>
<keyword id="KW-1185">Reference proteome</keyword>
<keyword id="KW-0677">Repeat</keyword>
<keyword id="KW-0688">Ribosomal frameshifting</keyword>
<keyword id="KW-0694">RNA-binding</keyword>
<keyword id="KW-1198">Viral budding</keyword>
<keyword id="KW-1187">Viral budding via the host ESCRT complexes</keyword>
<keyword id="KW-0543">Viral nucleoprotein</keyword>
<keyword id="KW-1188">Viral release from host cell</keyword>
<keyword id="KW-0946">Virion</keyword>
<keyword id="KW-0862">Zinc</keyword>
<keyword id="KW-0863">Zinc-finger</keyword>
<name>GAG_HV192</name>
<feature type="initiator methionine" description="Removed; by host" evidence="1">
    <location>
        <position position="1"/>
    </location>
</feature>
<feature type="chain" id="PRO_0000261202" description="Gag polyprotein">
    <location>
        <begin position="2"/>
        <end position="496"/>
    </location>
</feature>
<feature type="chain" id="PRO_0000246332" description="Matrix protein p17" evidence="1">
    <location>
        <begin position="2"/>
        <end position="130"/>
    </location>
</feature>
<feature type="chain" id="PRO_0000246333" description="Capsid protein p24" evidence="1">
    <location>
        <begin position="131"/>
        <end position="361"/>
    </location>
</feature>
<feature type="peptide" id="PRO_0000246334" description="Spacer peptide 1" evidence="1">
    <location>
        <begin position="362"/>
        <end position="374"/>
    </location>
</feature>
<feature type="chain" id="PRO_0000246335" description="Nucleocapsid protein p7" evidence="1">
    <location>
        <begin position="375"/>
        <end position="429"/>
    </location>
</feature>
<feature type="peptide" id="PRO_0000246336" description="Spacer peptide 2" evidence="1">
    <location>
        <begin position="430"/>
        <end position="445"/>
    </location>
</feature>
<feature type="chain" id="PRO_0000246337" description="p6-gag" evidence="1">
    <location>
        <begin position="446"/>
        <end position="496"/>
    </location>
</feature>
<feature type="zinc finger region" description="CCHC-type 1" evidence="8">
    <location>
        <begin position="387"/>
        <end position="404"/>
    </location>
</feature>
<feature type="zinc finger region" description="CCHC-type 2" evidence="8">
    <location>
        <begin position="408"/>
        <end position="425"/>
    </location>
</feature>
<feature type="region of interest" description="Interaction with Gp41" evidence="6">
    <location>
        <begin position="7"/>
        <end position="31"/>
    </location>
</feature>
<feature type="region of interest" description="Interaction with host CALM1" evidence="5">
    <location>
        <begin position="8"/>
        <end position="43"/>
    </location>
</feature>
<feature type="region of interest" description="Interaction with host AP3D1" evidence="7">
    <location>
        <begin position="12"/>
        <end position="19"/>
    </location>
</feature>
<feature type="region of interest" description="Interaction with membrane phosphatidylinositol 4,5-bisphosphate and RNA" evidence="6">
    <location>
        <begin position="14"/>
        <end position="33"/>
    </location>
</feature>
<feature type="region of interest" description="Interaction with membrane phosphatidylinositol 4,5-bisphosphate" evidence="6">
    <location>
        <begin position="73"/>
        <end position="77"/>
    </location>
</feature>
<feature type="region of interest" description="Disordered" evidence="9">
    <location>
        <begin position="106"/>
        <end position="126"/>
    </location>
</feature>
<feature type="region of interest" description="Interaction with host PPIA/CYPA and NUP153" evidence="6">
    <location>
        <begin position="187"/>
        <end position="225"/>
    </location>
</feature>
<feature type="region of interest" description="PPIA/CYPA-binding loop" evidence="5">
    <location>
        <begin position="215"/>
        <end position="223"/>
    </location>
</feature>
<feature type="region of interest" description="Dimerization/Multimerization of capsid protein p24" evidence="5">
    <location>
        <begin position="275"/>
        <end position="361"/>
    </location>
</feature>
<feature type="region of interest" description="Disordered" evidence="9">
    <location>
        <begin position="436"/>
        <end position="482"/>
    </location>
</feature>
<feature type="short sequence motif" description="Nuclear export signal" evidence="1">
    <location>
        <begin position="16"/>
        <end position="22"/>
    </location>
</feature>
<feature type="short sequence motif" description="Nuclear localization signal" evidence="1">
    <location>
        <begin position="26"/>
        <end position="32"/>
    </location>
</feature>
<feature type="short sequence motif" description="PTAP/PSAP motif">
    <location>
        <begin position="452"/>
        <end position="455"/>
    </location>
</feature>
<feature type="compositionally biased region" description="Basic and acidic residues" evidence="9">
    <location>
        <begin position="471"/>
        <end position="480"/>
    </location>
</feature>
<feature type="site" description="Cleavage; by viral protease" evidence="1">
    <location>
        <begin position="130"/>
        <end position="131"/>
    </location>
</feature>
<feature type="site" description="Cleavage; by viral protease" evidence="1">
    <location>
        <begin position="361"/>
        <end position="362"/>
    </location>
</feature>
<feature type="site" description="Cleavage; by viral protease" evidence="1">
    <location>
        <begin position="374"/>
        <end position="375"/>
    </location>
</feature>
<feature type="site" description="Cleavage; by viral protease" evidence="1">
    <location>
        <begin position="429"/>
        <end position="430"/>
    </location>
</feature>
<feature type="site" description="Cleavage; by viral protease" evidence="1">
    <location>
        <begin position="445"/>
        <end position="446"/>
    </location>
</feature>
<feature type="modified residue" description="Phosphoserine; by host MAPK1" evidence="6">
    <location>
        <position position="146"/>
    </location>
</feature>
<feature type="modified residue" description="Asymmetric dimethylarginine; in Nucleocapsid protein p7; by host PRMT6" evidence="1">
    <location>
        <position position="406"/>
    </location>
</feature>
<feature type="lipid moiety-binding region" description="N-myristoyl glycine; by host" evidence="1">
    <location>
        <position position="2"/>
    </location>
</feature>
<sequence length="496" mass="55422">MGARASILRGGKLDAWERIKLKPGGKKHYMMKHLVWASRELERFALDPGLLETSEGCKQIMKQLQPALQTGTKELISLHNTVATLYCVHEKIDVRDTKEALDKIKEEQNKSQQKTQQAEAADKGKVSQNYPIVQNLQGQMVHQPISARTLNAWVKVVEEKAFSPEVIPMFTALSEGATPQDLNTMLNTVGGHQAAMQMLKDTINEEAAEWDRLHPVHAGPVAPGQMREPRGSDIAGTTSTLQEQITWMTNNPPVPVGDIYKRWIILGLNKIVRMYSPVSILDIKQGPKEPFRDYVDRFFKTLRAEQATQDVKNWMTDTLLVQNANPDCKTILRALGPGASLEEMMTACQGVGGPGHKARVLAEAMSKVNNTNIMMQRSNCKGPKRTIKCFNCGKEGHLARNCRAPRKKGCWKCGKEGHQVKDCTERQANFLGKIWPSHRGRPGNLLQNRTEPTAPPEESFRFGEETTTPSRKQETIDKELPLTSLKSLFGSDPLST</sequence>
<organism>
    <name type="scientific">Human immunodeficiency virus type 1 group M subtype C (isolate 92BR025)</name>
    <name type="common">HIV-1</name>
    <dbReference type="NCBI Taxonomy" id="388812"/>
    <lineage>
        <taxon>Viruses</taxon>
        <taxon>Riboviria</taxon>
        <taxon>Pararnavirae</taxon>
        <taxon>Artverviricota</taxon>
        <taxon>Revtraviricetes</taxon>
        <taxon>Ortervirales</taxon>
        <taxon>Retroviridae</taxon>
        <taxon>Orthoretrovirinae</taxon>
        <taxon>Lentivirus</taxon>
        <taxon>Human immunodeficiency virus type 1</taxon>
    </lineage>
</organism>
<reference key="1">
    <citation type="journal article" date="1996" name="J. Virol.">
        <title>Molecular cloning and analysis of functional envelope genes from human immunodeficiency virus type 1 sequence subtypes A through G. The WHO and NIAID Networks for HIV Isolation and Characterization.</title>
        <authorList>
            <person name="Gao F."/>
            <person name="Morrison S.G."/>
            <person name="Robertson D.L."/>
            <person name="Thornton C.L."/>
            <person name="Craig S."/>
            <person name="Karlsson G."/>
            <person name="Sodroski J."/>
            <person name="Morgado M."/>
            <person name="Galvao-Castro B."/>
            <person name="von Briesen H."/>
            <person name="Beddows S."/>
            <person name="Weber J."/>
            <person name="Sharp P.M."/>
            <person name="Shaw G.M."/>
            <person name="Hahn B.H."/>
        </authorList>
    </citation>
    <scope>NUCLEOTIDE SEQUENCE [GENOMIC DNA]</scope>
</reference>
<comment type="function">
    <molecule>Gag polyprotein</molecule>
    <text evidence="5">Mediates, with Gag-Pol polyprotein, the essential events in virion assembly, including binding the plasma membrane, making the protein-protein interactions necessary to create spherical particles, recruiting the viral Env proteins, and packaging the genomic RNA via direct interactions with the RNA packaging sequence (Psi).</text>
</comment>
<comment type="function">
    <molecule>Matrix protein p17</molecule>
    <text evidence="1 6">Targets the polyprotein to the plasma membrane via a multipartite membrane-binding signal, that includes its myristoylated N-terminus (By similarity). Matrix protein is part of the pre-integration complex. Implicated in the release from host cell mediated by Vpu. Binds to RNA (By similarity).</text>
</comment>
<comment type="function">
    <molecule>Capsid protein p24</molecule>
    <text evidence="5 6">Forms the conical core that encapsulates the genomic RNA-nucleocapsid complex in the virion. Most core are conical, with only 7% tubular. The core is constituted by capsid protein hexamer subunits. The core is disassembled soon after virion entry (By similarity). The capsid promotes immune invasion by cloaking viral DNA from CGAS detection (By similarity). Host restriction factors such as TRIM5-alpha or TRIMCyp bind retroviral capsids and cause premature capsid disassembly, leading to blocks in reverse transcription. Capsid restriction by TRIM5 is one of the factors which restricts HIV-1 to the human species. Host PIN1 apparently facilitates the virion uncoating (By similarity). On the other hand, interactions with PDZD8 or CYPA stabilize the capsid (By similarity).</text>
</comment>
<comment type="function">
    <molecule>Nucleocapsid protein p7</molecule>
    <text evidence="5">Encapsulates and protects viral dimeric unspliced genomic RNA (gRNA). Binds these RNAs through its zinc fingers. Acts as a nucleic acid chaperone which is involved in rearangement of nucleic acid secondary structure during gRNA retrotranscription. Also facilitates template switch leading to recombination. As part of the polyprotein, participates in gRNA dimerization, packaging, tRNA incorporation and virion assembly.</text>
</comment>
<comment type="function">
    <molecule>p6-gag</molecule>
    <text evidence="6">Plays a role in budding of the assembled particle by interacting with the host class E VPS proteins TSG101 and PDCD6IP/AIP1.</text>
</comment>
<comment type="subunit">
    <molecule>Gag polyprotein</molecule>
    <text evidence="4 5">Homotrimer; further assembles as hexamers of trimers. Oligomerization possibly creates a central hole into which the cytoplasmic tail of the gp41 envelope protein may be inserted. Interacts with host TRIM22; this interaction seems to disrupt proper trafficking of Gag polyprotein and may interfere with budding. Interacts with host PDZD8. When ubiquitinated, interacts (via p6-gag domain) with host PACSIN2; this interaction allows PACSIN2 recruitment to viral assembly sites and its subsequent incorporation into virions. Interacts with MOV10 (By similarity).</text>
</comment>
<comment type="subunit">
    <molecule>Matrix protein p17</molecule>
    <text evidence="5 6">Homotrimer; further assembles as hexamers of trimers. Interacts with gp41 (via C-terminus). Interacts with host CALM1; this interaction induces a conformational change in the Matrix protein, triggering exposure of the myristate group. Interacts with host AP3D1; this interaction allows the polyprotein trafficking to multivesicular bodies during virus assembly. Part of the pre-integration complex (PIC) which is composed of viral genome, matrix protein, Vpr and integrase.</text>
</comment>
<comment type="subunit">
    <molecule>Capsid protein p24</molecule>
    <text evidence="5 6">Homodimer; the homodimer further multimerizes as homohexamers or homopentamers (By similarity). Interacts with host NUP98 (By similarity). Interacts with host PPIA/CYPA; this interaction stabilizes the capsid (By similarity). Interacts with host NUP153 (By similarity). Interacts with host PDZD8; this interaction stabilizes the capsid. Interacts with host TRIM5; this interaction destabilizes the capsid (By similarity). Interacts with host CPSF6 (By similarity). Interacts with host NONO; the interaction is weak (By similarity).</text>
</comment>
<comment type="subunit">
    <molecule>Nucleocapsid protein p7</molecule>
    <text evidence="6">Interacts with host NUP98.</text>
</comment>
<comment type="subunit">
    <molecule>p6-gag</molecule>
    <text evidence="3 6">Interacts with Vpr; this interaction allows Vpr incorporation into the virion. Interacts with host TSG101. p6-gag interacts with host PDCD6IP/AIP1.</text>
</comment>
<comment type="subcellular location">
    <molecule>Gag polyprotein</molecule>
    <subcellularLocation>
        <location evidence="6">Host cell membrane</location>
        <topology evidence="6">Lipid-anchor</topology>
    </subcellularLocation>
    <subcellularLocation>
        <location evidence="6">Host endosome</location>
        <location evidence="6">Host multivesicular body</location>
    </subcellularLocation>
    <text evidence="6">These locations are probably linked to virus assembly sites. The main location is the cell membrane, but under some circumstances, late endosomal compartments can serve as productive sites for virion assembly.</text>
</comment>
<comment type="subcellular location">
    <molecule>Matrix protein p17</molecule>
    <subcellularLocation>
        <location evidence="6">Virion membrane</location>
        <topology evidence="6">Lipid-anchor</topology>
    </subcellularLocation>
    <subcellularLocation>
        <location evidence="1">Host nucleus</location>
    </subcellularLocation>
    <subcellularLocation>
        <location evidence="1">Host cytoplasm</location>
    </subcellularLocation>
</comment>
<comment type="subcellular location">
    <molecule>Capsid protein p24</molecule>
    <subcellularLocation>
        <location evidence="6">Virion</location>
    </subcellularLocation>
</comment>
<comment type="subcellular location">
    <molecule>Nucleocapsid protein p7</molecule>
    <subcellularLocation>
        <location evidence="6">Virion</location>
    </subcellularLocation>
</comment>
<comment type="alternative products">
    <event type="ribosomal frameshifting"/>
    <isoform>
        <id>O12157-1</id>
        <name>Gag polyprotein</name>
        <sequence type="displayed"/>
    </isoform>
    <isoform>
        <id>O12158-1</id>
        <name>Gag-Pol polyprotein</name>
        <sequence type="external"/>
    </isoform>
    <text>Translation results in the formation of the Gag polyprotein most of the time. Ribosomal frameshifting at the gag-pol genes boundary occurs at low frequency and produces the Gag-Pol polyprotein. This strategy of translation probably allows the virus to modulate the quantity of each viral protein. Maintenance of a correct Gag to Gag-Pol ratio is essential for RNA dimerization and viral infectivity.</text>
</comment>
<comment type="domain">
    <text evidence="6">Late-budding domains (L domains) are short sequence motifs essential for viral particle budding. They recruit proteins of the host ESCRT machinery (Endosomal Sorting Complex Required for Transport) or ESCRT-associated proteins. p6-gag contains two L domains: a PTAP/PSAP motif, which interacts with the UEV domain of TSG101 and a LYPX(n)L motif which interacts with PDCD6IP/AIP1.</text>
</comment>
<comment type="PTM">
    <text evidence="6">Gag-Pol polyprotein: Specific enzymatic cleavages by the viral protease yield mature proteins.</text>
</comment>
<comment type="PTM">
    <molecule>Matrix protein p17</molecule>
    <text evidence="5">Tyrosine phosphorylated presumably in the virion by a host kinase. Phosphorylation is apparently not a major regulator of membrane association.</text>
</comment>
<comment type="PTM">
    <text evidence="6">Capsid protein p24 is phosphorylated possibly by host MAPK1; this phosphorylation is necessary for Pin1-mediated virion uncoating.</text>
</comment>
<comment type="PTM">
    <text evidence="2">Nucleocapsid protein p7 is methylated by host PRMT6, impairing its function by reducing RNA annealing and the initiation of reverse transcription.</text>
</comment>
<comment type="miscellaneous">
    <text>HIV-1 lineages are divided in three main groups, M (for Major), O (for Outlier), and N (for New, or Non-M, Non-O). The vast majority of strains found worldwide belong to the group M. Group O seems to be endemic to and largely confined to Cameroon and neighboring countries in West Central Africa, where these viruses represent a small minority of HIV-1 strains. The group N is represented by a limited number of isolates from Cameroonian persons. The group M is further subdivided in 9 clades or subtypes (A to D, F to H, J and K).</text>
</comment>
<comment type="miscellaneous">
    <molecule>Isoform Gag polyprotein</molecule>
    <text>Produced by conventional translation.</text>
</comment>
<comment type="similarity">
    <text evidence="10">Belongs to the primate lentivirus group gag polyprotein family.</text>
</comment>
<gene>
    <name type="primary">gag</name>
</gene>
<protein>
    <recommendedName>
        <fullName>Gag polyprotein</fullName>
    </recommendedName>
    <alternativeName>
        <fullName>Pr55Gag</fullName>
    </alternativeName>
    <component>
        <recommendedName>
            <fullName>Matrix protein p17</fullName>
            <shortName>MA</shortName>
        </recommendedName>
    </component>
    <component>
        <recommendedName>
            <fullName>Capsid protein p24</fullName>
            <shortName>CA</shortName>
        </recommendedName>
    </component>
    <component>
        <recommendedName>
            <fullName evidence="6">Spacer peptide 1</fullName>
            <shortName>SP1</shortName>
        </recommendedName>
        <alternativeName>
            <fullName>p2</fullName>
        </alternativeName>
    </component>
    <component>
        <recommendedName>
            <fullName>Nucleocapsid protein p7</fullName>
            <shortName>NC</shortName>
        </recommendedName>
    </component>
    <component>
        <recommendedName>
            <fullName evidence="6">Spacer peptide 2</fullName>
            <shortName>SP2</shortName>
        </recommendedName>
        <alternativeName>
            <fullName>p1</fullName>
        </alternativeName>
    </component>
    <component>
        <recommendedName>
            <fullName>p6-gag</fullName>
        </recommendedName>
    </component>
</protein>
<dbReference type="EMBL" id="U52953">
    <property type="protein sequence ID" value="AAB61122.1"/>
    <property type="molecule type" value="Genomic_DNA"/>
</dbReference>
<dbReference type="SMR" id="O12157"/>
<dbReference type="PRO" id="PR:O12157"/>
<dbReference type="Proteomes" id="UP000007686">
    <property type="component" value="Segment"/>
</dbReference>
<dbReference type="GO" id="GO:0042025">
    <property type="term" value="C:host cell nucleus"/>
    <property type="evidence" value="ECO:0007669"/>
    <property type="project" value="UniProtKB-SubCell"/>
</dbReference>
<dbReference type="GO" id="GO:0020002">
    <property type="term" value="C:host cell plasma membrane"/>
    <property type="evidence" value="ECO:0007669"/>
    <property type="project" value="UniProtKB-SubCell"/>
</dbReference>
<dbReference type="GO" id="GO:0072494">
    <property type="term" value="C:host multivesicular body"/>
    <property type="evidence" value="ECO:0007669"/>
    <property type="project" value="UniProtKB-SubCell"/>
</dbReference>
<dbReference type="GO" id="GO:0016020">
    <property type="term" value="C:membrane"/>
    <property type="evidence" value="ECO:0007669"/>
    <property type="project" value="UniProtKB-KW"/>
</dbReference>
<dbReference type="GO" id="GO:0019013">
    <property type="term" value="C:viral nucleocapsid"/>
    <property type="evidence" value="ECO:0007669"/>
    <property type="project" value="UniProtKB-KW"/>
</dbReference>
<dbReference type="GO" id="GO:0055036">
    <property type="term" value="C:virion membrane"/>
    <property type="evidence" value="ECO:0007669"/>
    <property type="project" value="UniProtKB-SubCell"/>
</dbReference>
<dbReference type="GO" id="GO:0003723">
    <property type="term" value="F:RNA binding"/>
    <property type="evidence" value="ECO:0007669"/>
    <property type="project" value="UniProtKB-KW"/>
</dbReference>
<dbReference type="GO" id="GO:0005198">
    <property type="term" value="F:structural molecule activity"/>
    <property type="evidence" value="ECO:0007669"/>
    <property type="project" value="InterPro"/>
</dbReference>
<dbReference type="GO" id="GO:0008270">
    <property type="term" value="F:zinc ion binding"/>
    <property type="evidence" value="ECO:0007669"/>
    <property type="project" value="UniProtKB-KW"/>
</dbReference>
<dbReference type="GO" id="GO:0039702">
    <property type="term" value="P:viral budding via host ESCRT complex"/>
    <property type="evidence" value="ECO:0007669"/>
    <property type="project" value="UniProtKB-KW"/>
</dbReference>
<dbReference type="GO" id="GO:0075523">
    <property type="term" value="P:viral translational frameshifting"/>
    <property type="evidence" value="ECO:0007669"/>
    <property type="project" value="UniProtKB-KW"/>
</dbReference>
<dbReference type="FunFam" id="1.10.1200.30:FF:000001">
    <property type="entry name" value="Gag polyprotein"/>
    <property type="match status" value="1"/>
</dbReference>
<dbReference type="FunFam" id="1.10.375.10:FF:000001">
    <property type="entry name" value="Gag polyprotein"/>
    <property type="match status" value="1"/>
</dbReference>
<dbReference type="FunFam" id="4.10.60.10:FF:000001">
    <property type="entry name" value="Gag polyprotein"/>
    <property type="match status" value="1"/>
</dbReference>
<dbReference type="Gene3D" id="1.10.1200.30">
    <property type="match status" value="1"/>
</dbReference>
<dbReference type="Gene3D" id="6.10.250.390">
    <property type="match status" value="1"/>
</dbReference>
<dbReference type="Gene3D" id="1.10.375.10">
    <property type="entry name" value="Human Immunodeficiency Virus Type 1 Capsid Protein"/>
    <property type="match status" value="1"/>
</dbReference>
<dbReference type="Gene3D" id="1.10.150.90">
    <property type="entry name" value="Immunodeficiency lentiviruses, gag gene matrix protein p17"/>
    <property type="match status" value="1"/>
</dbReference>
<dbReference type="Gene3D" id="1.20.5.760">
    <property type="entry name" value="Single helix bin"/>
    <property type="match status" value="1"/>
</dbReference>
<dbReference type="Gene3D" id="4.10.60.10">
    <property type="entry name" value="Zinc finger, CCHC-type"/>
    <property type="match status" value="1"/>
</dbReference>
<dbReference type="InterPro" id="IPR045345">
    <property type="entry name" value="Gag_p24_C"/>
</dbReference>
<dbReference type="InterPro" id="IPR014817">
    <property type="entry name" value="Gag_p6"/>
</dbReference>
<dbReference type="InterPro" id="IPR000071">
    <property type="entry name" value="Lentvrl_matrix_N"/>
</dbReference>
<dbReference type="InterPro" id="IPR012344">
    <property type="entry name" value="Matrix_HIV/RSV_N"/>
</dbReference>
<dbReference type="InterPro" id="IPR050195">
    <property type="entry name" value="Primate_lentivir_Gag_pol-like"/>
</dbReference>
<dbReference type="InterPro" id="IPR008916">
    <property type="entry name" value="Retrov_capsid_C"/>
</dbReference>
<dbReference type="InterPro" id="IPR008919">
    <property type="entry name" value="Retrov_capsid_N"/>
</dbReference>
<dbReference type="InterPro" id="IPR010999">
    <property type="entry name" value="Retrovr_matrix"/>
</dbReference>
<dbReference type="InterPro" id="IPR001878">
    <property type="entry name" value="Znf_CCHC"/>
</dbReference>
<dbReference type="InterPro" id="IPR036875">
    <property type="entry name" value="Znf_CCHC_sf"/>
</dbReference>
<dbReference type="PANTHER" id="PTHR40389:SF4">
    <property type="match status" value="1"/>
</dbReference>
<dbReference type="PANTHER" id="PTHR40389">
    <property type="entry name" value="ENDOGENOUS RETROVIRUS GROUP K MEMBER 24 GAG POLYPROTEIN-RELATED"/>
    <property type="match status" value="1"/>
</dbReference>
<dbReference type="Pfam" id="PF00540">
    <property type="entry name" value="Gag_p17"/>
    <property type="match status" value="1"/>
</dbReference>
<dbReference type="Pfam" id="PF00607">
    <property type="entry name" value="Gag_p24"/>
    <property type="match status" value="1"/>
</dbReference>
<dbReference type="Pfam" id="PF19317">
    <property type="entry name" value="Gag_p24_C"/>
    <property type="match status" value="1"/>
</dbReference>
<dbReference type="Pfam" id="PF08705">
    <property type="entry name" value="Gag_p6"/>
    <property type="match status" value="1"/>
</dbReference>
<dbReference type="Pfam" id="PF00098">
    <property type="entry name" value="zf-CCHC"/>
    <property type="match status" value="2"/>
</dbReference>
<dbReference type="PRINTS" id="PR00234">
    <property type="entry name" value="HIV1MATRIX"/>
</dbReference>
<dbReference type="SMART" id="SM00343">
    <property type="entry name" value="ZnF_C2HC"/>
    <property type="match status" value="2"/>
</dbReference>
<dbReference type="SUPFAM" id="SSF47836">
    <property type="entry name" value="Retroviral matrix proteins"/>
    <property type="match status" value="1"/>
</dbReference>
<dbReference type="SUPFAM" id="SSF47353">
    <property type="entry name" value="Retrovirus capsid dimerization domain-like"/>
    <property type="match status" value="1"/>
</dbReference>
<dbReference type="SUPFAM" id="SSF47943">
    <property type="entry name" value="Retrovirus capsid protein, N-terminal core domain"/>
    <property type="match status" value="1"/>
</dbReference>
<dbReference type="SUPFAM" id="SSF57756">
    <property type="entry name" value="Retrovirus zinc finger-like domains"/>
    <property type="match status" value="1"/>
</dbReference>
<dbReference type="PROSITE" id="PS50158">
    <property type="entry name" value="ZF_CCHC"/>
    <property type="match status" value="2"/>
</dbReference>
<organismHost>
    <name type="scientific">Homo sapiens</name>
    <name type="common">Human</name>
    <dbReference type="NCBI Taxonomy" id="9606"/>
</organismHost>
<evidence type="ECO:0000250" key="1"/>
<evidence type="ECO:0000250" key="2">
    <source>
        <dbReference type="UniProtKB" id="P03347"/>
    </source>
</evidence>
<evidence type="ECO:0000250" key="3">
    <source>
        <dbReference type="UniProtKB" id="P03348"/>
    </source>
</evidence>
<evidence type="ECO:0000250" key="4">
    <source>
        <dbReference type="UniProtKB" id="P03349"/>
    </source>
</evidence>
<evidence type="ECO:0000250" key="5">
    <source>
        <dbReference type="UniProtKB" id="P04591"/>
    </source>
</evidence>
<evidence type="ECO:0000250" key="6">
    <source>
        <dbReference type="UniProtKB" id="P12493"/>
    </source>
</evidence>
<evidence type="ECO:0000250" key="7">
    <source>
        <dbReference type="UniProtKB" id="P12497"/>
    </source>
</evidence>
<evidence type="ECO:0000255" key="8">
    <source>
        <dbReference type="PROSITE-ProRule" id="PRU00047"/>
    </source>
</evidence>
<evidence type="ECO:0000256" key="9">
    <source>
        <dbReference type="SAM" id="MobiDB-lite"/>
    </source>
</evidence>
<evidence type="ECO:0000305" key="10"/>
<accession>O12157</accession>
<proteinExistence type="inferred from homology"/>